<protein>
    <recommendedName>
        <fullName>Lebocin-1/2</fullName>
    </recommendedName>
</protein>
<sequence length="179" mass="20955">MYKFLVFSSVLVLFFAQASCQRFIQPTFRPPPTQRPIIRTARQAGQEPLWLYQGDNVPRAPSTADHPILPSKIDDVQLDPNRRYVRSVTNPENNEASIEHSHHTVDTGLDQPIESHRNTRDLRFLYPRGKLPVPTPPPFNPKPIYIDMGNRYRRHASDDQEELRQYNEHFLIPRDIFQE</sequence>
<evidence type="ECO:0000255" key="1"/>
<evidence type="ECO:0000256" key="2">
    <source>
        <dbReference type="SAM" id="MobiDB-lite"/>
    </source>
</evidence>
<evidence type="ECO:0000269" key="3">
    <source>
    </source>
</evidence>
<evidence type="ECO:0000305" key="4"/>
<dbReference type="EMBL" id="S79612">
    <property type="protein sequence ID" value="AAB35218.1"/>
    <property type="molecule type" value="mRNA"/>
</dbReference>
<dbReference type="PIR" id="JC4247">
    <property type="entry name" value="JC4247"/>
</dbReference>
<dbReference type="RefSeq" id="NP_001037468.1">
    <property type="nucleotide sequence ID" value="NM_001044003.1"/>
</dbReference>
<dbReference type="SMR" id="P54684"/>
<dbReference type="STRING" id="7091.P54684"/>
<dbReference type="TCDB" id="1.C.117.1.1">
    <property type="family name" value="the antibacterial peptide lebocin (lebocin) family"/>
</dbReference>
<dbReference type="iPTMnet" id="P54684"/>
<dbReference type="HOGENOM" id="CLU_128921_0_0_1"/>
<dbReference type="InParanoid" id="P54684"/>
<dbReference type="Proteomes" id="UP000005204">
    <property type="component" value="Unassembled WGS sequence"/>
</dbReference>
<dbReference type="GO" id="GO:0005576">
    <property type="term" value="C:extracellular region"/>
    <property type="evidence" value="ECO:0007669"/>
    <property type="project" value="UniProtKB-SubCell"/>
</dbReference>
<dbReference type="GO" id="GO:0042742">
    <property type="term" value="P:defense response to bacterium"/>
    <property type="evidence" value="ECO:0007669"/>
    <property type="project" value="UniProtKB-KW"/>
</dbReference>
<dbReference type="GO" id="GO:0045087">
    <property type="term" value="P:innate immune response"/>
    <property type="evidence" value="ECO:0007669"/>
    <property type="project" value="UniProtKB-KW"/>
</dbReference>
<comment type="function">
    <text>Antibacterial peptide.</text>
</comment>
<comment type="subcellular location">
    <subcellularLocation>
        <location>Secreted</location>
    </subcellularLocation>
</comment>
<comment type="tissue specificity">
    <text>Hemolymph. Produced in fat body.</text>
</comment>
<comment type="induction">
    <text>By bacterial infection.</text>
</comment>
<comment type="PTM">
    <text evidence="3">O-glycosylation is important for the antibacterial activity of lebocin, O-linked glycan structure is a disaccharide (Gal-GalNAc) in case of lebocin 1 and a monosaccharide (GalNAc) in case of lebocin 2.</text>
</comment>
<comment type="similarity">
    <text evidence="4">Belongs to the lebocin family.</text>
</comment>
<name>LEB1_BOMMO</name>
<organism>
    <name type="scientific">Bombyx mori</name>
    <name type="common">Silk moth</name>
    <dbReference type="NCBI Taxonomy" id="7091"/>
    <lineage>
        <taxon>Eukaryota</taxon>
        <taxon>Metazoa</taxon>
        <taxon>Ecdysozoa</taxon>
        <taxon>Arthropoda</taxon>
        <taxon>Hexapoda</taxon>
        <taxon>Insecta</taxon>
        <taxon>Pterygota</taxon>
        <taxon>Neoptera</taxon>
        <taxon>Endopterygota</taxon>
        <taxon>Lepidoptera</taxon>
        <taxon>Glossata</taxon>
        <taxon>Ditrysia</taxon>
        <taxon>Bombycoidea</taxon>
        <taxon>Bombycidae</taxon>
        <taxon>Bombycinae</taxon>
        <taxon>Bombyx</taxon>
    </lineage>
</organism>
<accession>P54684</accession>
<keyword id="KW-0044">Antibiotic</keyword>
<keyword id="KW-0929">Antimicrobial</keyword>
<keyword id="KW-0903">Direct protein sequencing</keyword>
<keyword id="KW-0325">Glycoprotein</keyword>
<keyword id="KW-0391">Immunity</keyword>
<keyword id="KW-0399">Innate immunity</keyword>
<keyword id="KW-1185">Reference proteome</keyword>
<keyword id="KW-0964">Secreted</keyword>
<keyword id="KW-0732">Signal</keyword>
<feature type="signal peptide" evidence="1">
    <location>
        <begin position="1"/>
        <end position="16"/>
    </location>
</feature>
<feature type="propeptide" id="PRO_0000004974" evidence="1">
    <location>
        <begin position="17"/>
        <end position="120"/>
    </location>
</feature>
<feature type="peptide" id="PRO_0000004975" description="Lebocin-1/2">
    <location>
        <begin position="121"/>
        <end position="152"/>
    </location>
</feature>
<feature type="propeptide" id="PRO_0000004976" evidence="1">
    <location>
        <begin position="153"/>
        <end position="179"/>
    </location>
</feature>
<feature type="region of interest" description="Disordered" evidence="2">
    <location>
        <begin position="93"/>
        <end position="116"/>
    </location>
</feature>
<feature type="glycosylation site" description="O-linked (GalNAc...) threonine" evidence="3">
    <location>
        <position position="135"/>
    </location>
</feature>
<proteinExistence type="evidence at protein level"/>
<reference key="1">
    <citation type="journal article" date="1995" name="Biochem. Biophys. Res. Commun.">
        <title>cDNA cloning and gene expression of lebocin, a novel member of antibacterial peptides from the silkworm, Bombyx mori.</title>
        <authorList>
            <person name="Chowdhury S."/>
            <person name="Taniai K."/>
            <person name="Hara S."/>
            <person name="Kadono-Okuda K."/>
            <person name="Kato Y."/>
            <person name="Yamamoto M."/>
            <person name="Xu J."/>
            <person name="Choi S.K."/>
            <person name="Debnath N.C."/>
            <person name="Choi H.K."/>
            <person name="Miyanoshita A."/>
            <person name="Sugiyama M."/>
            <person name="Asaoka A."/>
            <person name="Yamakawa M."/>
        </authorList>
    </citation>
    <scope>NUCLEOTIDE SEQUENCE [MRNA]</scope>
    <source>
        <strain>Tokai X Asahi</strain>
        <tissue>Fat body</tissue>
    </source>
</reference>
<reference key="2">
    <citation type="journal article" date="1995" name="Biochem. J.">
        <title>A novel antibacterial peptide family isolated from the silkworm, Bombyx mori.</title>
        <authorList>
            <person name="Hara S."/>
            <person name="Yamakawa M."/>
        </authorList>
    </citation>
    <scope>PROTEIN SEQUENCE OF 121-152</scope>
    <scope>GLYCOSYLATION AT THR-135</scope>
    <source>
        <tissue>Hemolymph</tissue>
    </source>
</reference>